<accession>P0CD39</accession>
<accession>A1XGT1</accession>
<comment type="function">
    <text evidence="1">NDH shuttles electrons from NAD(P)H:plastoquinone, via FMN and iron-sulfur (Fe-S) centers, to quinones in the photosynthetic chain and possibly in a chloroplast respiratory chain. The immediate electron acceptor for the enzyme in this species is believed to be plastoquinone. Couples the redox reaction to proton translocation, and thus conserves the redox energy in a proton gradient.</text>
</comment>
<comment type="catalytic activity">
    <reaction evidence="1">
        <text>a plastoquinone + NADH + (n+1) H(+)(in) = a plastoquinol + NAD(+) + n H(+)(out)</text>
        <dbReference type="Rhea" id="RHEA:42608"/>
        <dbReference type="Rhea" id="RHEA-COMP:9561"/>
        <dbReference type="Rhea" id="RHEA-COMP:9562"/>
        <dbReference type="ChEBI" id="CHEBI:15378"/>
        <dbReference type="ChEBI" id="CHEBI:17757"/>
        <dbReference type="ChEBI" id="CHEBI:57540"/>
        <dbReference type="ChEBI" id="CHEBI:57945"/>
        <dbReference type="ChEBI" id="CHEBI:62192"/>
    </reaction>
</comment>
<comment type="catalytic activity">
    <reaction evidence="1">
        <text>a plastoquinone + NADPH + (n+1) H(+)(in) = a plastoquinol + NADP(+) + n H(+)(out)</text>
        <dbReference type="Rhea" id="RHEA:42612"/>
        <dbReference type="Rhea" id="RHEA-COMP:9561"/>
        <dbReference type="Rhea" id="RHEA-COMP:9562"/>
        <dbReference type="ChEBI" id="CHEBI:15378"/>
        <dbReference type="ChEBI" id="CHEBI:17757"/>
        <dbReference type="ChEBI" id="CHEBI:57783"/>
        <dbReference type="ChEBI" id="CHEBI:58349"/>
        <dbReference type="ChEBI" id="CHEBI:62192"/>
    </reaction>
</comment>
<comment type="subunit">
    <text evidence="1">NDH is composed of at least 16 different subunits, 5 of which are encoded in the nucleus.</text>
</comment>
<comment type="subcellular location">
    <subcellularLocation>
        <location evidence="1">Plastid</location>
        <location evidence="1">Chloroplast thylakoid membrane</location>
        <topology evidence="1">Multi-pass membrane protein</topology>
    </subcellularLocation>
</comment>
<comment type="similarity">
    <text evidence="1">Belongs to the complex I subunit 2 family.</text>
</comment>
<evidence type="ECO:0000255" key="1">
    <source>
        <dbReference type="HAMAP-Rule" id="MF_00445"/>
    </source>
</evidence>
<keyword id="KW-0150">Chloroplast</keyword>
<keyword id="KW-0472">Membrane</keyword>
<keyword id="KW-0520">NAD</keyword>
<keyword id="KW-0521">NADP</keyword>
<keyword id="KW-0934">Plastid</keyword>
<keyword id="KW-0618">Plastoquinone</keyword>
<keyword id="KW-0874">Quinone</keyword>
<keyword id="KW-0793">Thylakoid</keyword>
<keyword id="KW-1278">Translocase</keyword>
<keyword id="KW-0812">Transmembrane</keyword>
<keyword id="KW-1133">Transmembrane helix</keyword>
<keyword id="KW-0813">Transport</keyword>
<proteinExistence type="inferred from homology"/>
<protein>
    <recommendedName>
        <fullName evidence="1">NAD(P)H-quinone oxidoreductase subunit 2 B, chloroplastic</fullName>
        <ecNumber evidence="1">7.1.1.-</ecNumber>
    </recommendedName>
    <alternativeName>
        <fullName evidence="1">NAD(P)H dehydrogenase, subunit 2 B</fullName>
    </alternativeName>
    <alternativeName>
        <fullName evidence="1">NADH-plastoquinone oxidoreductase subunit 2 B</fullName>
    </alternativeName>
</protein>
<sequence length="510" mass="56675">MIWHVQNENFILDSTRIFMKAFHLLLFHGSFIFPECILIFGLILLLMIDLTSDQKDIPWLYFISSTSLVMSIAALLFRWREEPMISFSGNFQTNNFNEIFQFLILLCSTLCIPLSVEYIECTEMAITEFLLFVLTATLGGMFLCGANDLITIFVAPECFSLCSYLLSGYTKRDVRSNEATMKYLLMGGASSSILVHGFSWLYGSSGGEIELQEIANGLINTQMYNSPGISIALIFITVGIGFKLSLAPSHQWTPDVYEGSPTPVVAFLSVTSKVAASALATRIFDIPFYFSSNEWHLLLEILAILSMILGNLIAITQTSMKRMLAYSSIGQIGYVIIGIIVGDSNDGYASMITYMLFYISMNLGTFACIVSFGLRTGTDNIRDYAGLYTKDPFLALSLALCLLSLGGLPPLAGFFGKLHLFWCGWQAGLYFLVSIGLLTSVVSIYYYLKIIKLLMTGRNQEITPHVRNYRRSPLRSNNSIELSMIVCVIASTIPGISMNPIIAIAQDTLF</sequence>
<geneLocation type="chloroplast"/>
<dbReference type="EC" id="7.1.1.-" evidence="1"/>
<dbReference type="EMBL" id="DQ359689">
    <property type="protein sequence ID" value="ABC70814.1"/>
    <property type="molecule type" value="Genomic_DNA"/>
</dbReference>
<dbReference type="SMR" id="P0CD39"/>
<dbReference type="GO" id="GO:0009535">
    <property type="term" value="C:chloroplast thylakoid membrane"/>
    <property type="evidence" value="ECO:0007669"/>
    <property type="project" value="UniProtKB-SubCell"/>
</dbReference>
<dbReference type="GO" id="GO:0008137">
    <property type="term" value="F:NADH dehydrogenase (ubiquinone) activity"/>
    <property type="evidence" value="ECO:0007669"/>
    <property type="project" value="InterPro"/>
</dbReference>
<dbReference type="GO" id="GO:0048038">
    <property type="term" value="F:quinone binding"/>
    <property type="evidence" value="ECO:0007669"/>
    <property type="project" value="UniProtKB-KW"/>
</dbReference>
<dbReference type="GO" id="GO:0042773">
    <property type="term" value="P:ATP synthesis coupled electron transport"/>
    <property type="evidence" value="ECO:0007669"/>
    <property type="project" value="InterPro"/>
</dbReference>
<dbReference type="GO" id="GO:0019684">
    <property type="term" value="P:photosynthesis, light reaction"/>
    <property type="evidence" value="ECO:0007669"/>
    <property type="project" value="UniProtKB-UniRule"/>
</dbReference>
<dbReference type="HAMAP" id="MF_00445">
    <property type="entry name" value="NDH1_NuoN_1"/>
    <property type="match status" value="1"/>
</dbReference>
<dbReference type="InterPro" id="IPR010096">
    <property type="entry name" value="NADH-Q_OxRdtase_suN/2"/>
</dbReference>
<dbReference type="InterPro" id="IPR001750">
    <property type="entry name" value="ND/Mrp_TM"/>
</dbReference>
<dbReference type="InterPro" id="IPR045693">
    <property type="entry name" value="Ndh2_N"/>
</dbReference>
<dbReference type="NCBIfam" id="TIGR01770">
    <property type="entry name" value="NDH_I_N"/>
    <property type="match status" value="1"/>
</dbReference>
<dbReference type="NCBIfam" id="NF002701">
    <property type="entry name" value="PRK02504.1"/>
    <property type="match status" value="1"/>
</dbReference>
<dbReference type="PANTHER" id="PTHR22773">
    <property type="entry name" value="NADH DEHYDROGENASE"/>
    <property type="match status" value="1"/>
</dbReference>
<dbReference type="Pfam" id="PF19530">
    <property type="entry name" value="Ndh2_N"/>
    <property type="match status" value="1"/>
</dbReference>
<dbReference type="Pfam" id="PF00361">
    <property type="entry name" value="Proton_antipo_M"/>
    <property type="match status" value="1"/>
</dbReference>
<gene>
    <name evidence="1" type="primary">ndhB2</name>
</gene>
<feature type="chain" id="PRO_0000391307" description="NAD(P)H-quinone oxidoreductase subunit 2 B, chloroplastic">
    <location>
        <begin position="1"/>
        <end position="510"/>
    </location>
</feature>
<feature type="transmembrane region" description="Helical" evidence="1">
    <location>
        <begin position="24"/>
        <end position="44"/>
    </location>
</feature>
<feature type="transmembrane region" description="Helical" evidence="1">
    <location>
        <begin position="57"/>
        <end position="77"/>
    </location>
</feature>
<feature type="transmembrane region" description="Helical" evidence="1">
    <location>
        <begin position="99"/>
        <end position="119"/>
    </location>
</feature>
<feature type="transmembrane region" description="Helical" evidence="1">
    <location>
        <begin position="124"/>
        <end position="144"/>
    </location>
</feature>
<feature type="transmembrane region" description="Helical" evidence="1">
    <location>
        <begin position="149"/>
        <end position="169"/>
    </location>
</feature>
<feature type="transmembrane region" description="Helical" evidence="1">
    <location>
        <begin position="183"/>
        <end position="203"/>
    </location>
</feature>
<feature type="transmembrane region" description="Helical" evidence="1">
    <location>
        <begin position="227"/>
        <end position="247"/>
    </location>
</feature>
<feature type="transmembrane region" description="Helical" evidence="1">
    <location>
        <begin position="295"/>
        <end position="315"/>
    </location>
</feature>
<feature type="transmembrane region" description="Helical" evidence="1">
    <location>
        <begin position="323"/>
        <end position="343"/>
    </location>
</feature>
<feature type="transmembrane region" description="Helical" evidence="1">
    <location>
        <begin position="354"/>
        <end position="374"/>
    </location>
</feature>
<feature type="transmembrane region" description="Helical" evidence="1">
    <location>
        <begin position="395"/>
        <end position="415"/>
    </location>
</feature>
<feature type="transmembrane region" description="Helical" evidence="1">
    <location>
        <begin position="418"/>
        <end position="438"/>
    </location>
</feature>
<feature type="transmembrane region" description="Helical" evidence="1">
    <location>
        <begin position="484"/>
        <end position="504"/>
    </location>
</feature>
<reference key="1">
    <citation type="journal article" date="2007" name="BMC Genomics">
        <title>Comparative chloroplast genomics: analyses including new sequences from the angiosperms Nuphar advena and Ranunculus macranthus.</title>
        <authorList>
            <person name="Raubeson L.A."/>
            <person name="Peery R."/>
            <person name="Chumley T.W."/>
            <person name="Dziubek C."/>
            <person name="Fourcade H.M."/>
            <person name="Boore J.L."/>
            <person name="Jansen R.K."/>
        </authorList>
    </citation>
    <scope>NUCLEOTIDE SEQUENCE [LARGE SCALE GENOMIC DNA]</scope>
</reference>
<name>NU2C2_RANMC</name>
<organism>
    <name type="scientific">Ranunculus macranthus</name>
    <name type="common">Large buttercup</name>
    <dbReference type="NCBI Taxonomy" id="334596"/>
    <lineage>
        <taxon>Eukaryota</taxon>
        <taxon>Viridiplantae</taxon>
        <taxon>Streptophyta</taxon>
        <taxon>Embryophyta</taxon>
        <taxon>Tracheophyta</taxon>
        <taxon>Spermatophyta</taxon>
        <taxon>Magnoliopsida</taxon>
        <taxon>Ranunculales</taxon>
        <taxon>Ranunculaceae</taxon>
        <taxon>Ranunculoideae</taxon>
        <taxon>Ranunculeae</taxon>
        <taxon>Ranunculus</taxon>
    </lineage>
</organism>